<evidence type="ECO:0000250" key="1">
    <source>
        <dbReference type="UniProtKB" id="P03901"/>
    </source>
</evidence>
<evidence type="ECO:0000250" key="2">
    <source>
        <dbReference type="UniProtKB" id="P03902"/>
    </source>
</evidence>
<evidence type="ECO:0000255" key="3"/>
<evidence type="ECO:0000305" key="4"/>
<keyword id="KW-0249">Electron transport</keyword>
<keyword id="KW-0472">Membrane</keyword>
<keyword id="KW-0496">Mitochondrion</keyword>
<keyword id="KW-0999">Mitochondrion inner membrane</keyword>
<keyword id="KW-0520">NAD</keyword>
<keyword id="KW-0679">Respiratory chain</keyword>
<keyword id="KW-1278">Translocase</keyword>
<keyword id="KW-0812">Transmembrane</keyword>
<keyword id="KW-1133">Transmembrane helix</keyword>
<keyword id="KW-0813">Transport</keyword>
<keyword id="KW-0830">Ubiquinone</keyword>
<geneLocation type="mitochondrion"/>
<comment type="function">
    <text evidence="1">Core subunit of the mitochondrial membrane respiratory chain NADH dehydrogenase (Complex I) which catalyzes electron transfer from NADH through the respiratory chain, using ubiquinone as an electron acceptor. Part of the enzyme membrane arm which is embedded in the lipid bilayer and involved in proton translocation.</text>
</comment>
<comment type="catalytic activity">
    <reaction evidence="1">
        <text>a ubiquinone + NADH + 5 H(+)(in) = a ubiquinol + NAD(+) + 4 H(+)(out)</text>
        <dbReference type="Rhea" id="RHEA:29091"/>
        <dbReference type="Rhea" id="RHEA-COMP:9565"/>
        <dbReference type="Rhea" id="RHEA-COMP:9566"/>
        <dbReference type="ChEBI" id="CHEBI:15378"/>
        <dbReference type="ChEBI" id="CHEBI:16389"/>
        <dbReference type="ChEBI" id="CHEBI:17976"/>
        <dbReference type="ChEBI" id="CHEBI:57540"/>
        <dbReference type="ChEBI" id="CHEBI:57945"/>
        <dbReference type="EC" id="7.1.1.2"/>
    </reaction>
    <physiologicalReaction direction="left-to-right" evidence="1">
        <dbReference type="Rhea" id="RHEA:29092"/>
    </physiologicalReaction>
</comment>
<comment type="subunit">
    <text evidence="2">Core subunit of respiratory chain NADH dehydrogenase (Complex I) which is composed of 45 different subunits.</text>
</comment>
<comment type="subcellular location">
    <subcellularLocation>
        <location evidence="2">Mitochondrion inner membrane</location>
        <topology evidence="3">Multi-pass membrane protein</topology>
    </subcellularLocation>
</comment>
<comment type="similarity">
    <text evidence="4">Belongs to the complex I subunit 4L family.</text>
</comment>
<sequence>MPSISTNITLAFITALLGMLIFRSHLMSSLLCLEGMMLSMFILSTLTILSLHFTTSFMMPILLLVFAACEAAVGLALLVTVSNTYGLDYIQNLNLLQC</sequence>
<proteinExistence type="inferred from homology"/>
<name>NU4LM_HAPAU</name>
<organism>
    <name type="scientific">Hapalemur aureus</name>
    <name type="common">Golden bamboo lemur</name>
    <dbReference type="NCBI Taxonomy" id="122222"/>
    <lineage>
        <taxon>Eukaryota</taxon>
        <taxon>Metazoa</taxon>
        <taxon>Chordata</taxon>
        <taxon>Craniata</taxon>
        <taxon>Vertebrata</taxon>
        <taxon>Euteleostomi</taxon>
        <taxon>Mammalia</taxon>
        <taxon>Eutheria</taxon>
        <taxon>Euarchontoglires</taxon>
        <taxon>Primates</taxon>
        <taxon>Strepsirrhini</taxon>
        <taxon>Lemuriformes</taxon>
        <taxon>Lemuridae</taxon>
        <taxon>Hapalemur</taxon>
    </lineage>
</organism>
<feature type="chain" id="PRO_0000118427" description="NADH-ubiquinone oxidoreductase chain 4L">
    <location>
        <begin position="1"/>
        <end position="98"/>
    </location>
</feature>
<feature type="transmembrane region" description="Helical" evidence="3">
    <location>
        <begin position="2"/>
        <end position="22"/>
    </location>
</feature>
<feature type="transmembrane region" description="Helical" evidence="3">
    <location>
        <begin position="29"/>
        <end position="49"/>
    </location>
</feature>
<feature type="transmembrane region" description="Helical" evidence="3">
    <location>
        <begin position="61"/>
        <end position="81"/>
    </location>
</feature>
<protein>
    <recommendedName>
        <fullName>NADH-ubiquinone oxidoreductase chain 4L</fullName>
        <ecNumber>7.1.1.2</ecNumber>
    </recommendedName>
    <alternativeName>
        <fullName>NADH dehydrogenase subunit 4L</fullName>
    </alternativeName>
</protein>
<gene>
    <name type="primary">MT-ND4L</name>
    <name type="synonym">MTND4L</name>
    <name type="synonym">NADH4L</name>
    <name type="synonym">ND4L</name>
</gene>
<dbReference type="EC" id="7.1.1.2"/>
<dbReference type="EMBL" id="AF224581">
    <property type="protein sequence ID" value="AAN64775.1"/>
    <property type="molecule type" value="Genomic_DNA"/>
</dbReference>
<dbReference type="EMBL" id="AF224582">
    <property type="protein sequence ID" value="AAN64779.1"/>
    <property type="molecule type" value="Genomic_DNA"/>
</dbReference>
<dbReference type="EMBL" id="AY582549">
    <property type="protein sequence ID" value="AAT35859.1"/>
    <property type="molecule type" value="Genomic_DNA"/>
</dbReference>
<dbReference type="EMBL" id="AY582550">
    <property type="protein sequence ID" value="AAT35863.1"/>
    <property type="molecule type" value="Genomic_DNA"/>
</dbReference>
<dbReference type="SMR" id="Q8HC89"/>
<dbReference type="GO" id="GO:0005743">
    <property type="term" value="C:mitochondrial inner membrane"/>
    <property type="evidence" value="ECO:0000250"/>
    <property type="project" value="UniProtKB"/>
</dbReference>
<dbReference type="GO" id="GO:0045271">
    <property type="term" value="C:respiratory chain complex I"/>
    <property type="evidence" value="ECO:0000250"/>
    <property type="project" value="UniProtKB"/>
</dbReference>
<dbReference type="GO" id="GO:0008137">
    <property type="term" value="F:NADH dehydrogenase (ubiquinone) activity"/>
    <property type="evidence" value="ECO:0000250"/>
    <property type="project" value="UniProtKB"/>
</dbReference>
<dbReference type="GO" id="GO:0042773">
    <property type="term" value="P:ATP synthesis coupled electron transport"/>
    <property type="evidence" value="ECO:0007669"/>
    <property type="project" value="InterPro"/>
</dbReference>
<dbReference type="FunFam" id="1.10.287.3510:FF:000002">
    <property type="entry name" value="NADH-ubiquinone oxidoreductase chain 4L"/>
    <property type="match status" value="1"/>
</dbReference>
<dbReference type="Gene3D" id="1.10.287.3510">
    <property type="match status" value="1"/>
</dbReference>
<dbReference type="InterPro" id="IPR001133">
    <property type="entry name" value="NADH_UbQ_OxRdtase_chain4L/K"/>
</dbReference>
<dbReference type="InterPro" id="IPR039428">
    <property type="entry name" value="NUOK/Mnh_C1-like"/>
</dbReference>
<dbReference type="PANTHER" id="PTHR11434:SF0">
    <property type="entry name" value="NADH-UBIQUINONE OXIDOREDUCTASE CHAIN 4L"/>
    <property type="match status" value="1"/>
</dbReference>
<dbReference type="PANTHER" id="PTHR11434">
    <property type="entry name" value="NADH-UBIQUINONE OXIDOREDUCTASE SUBUNIT ND4L"/>
    <property type="match status" value="1"/>
</dbReference>
<dbReference type="Pfam" id="PF00420">
    <property type="entry name" value="Oxidored_q2"/>
    <property type="match status" value="1"/>
</dbReference>
<reference key="1">
    <citation type="journal article" date="2003" name="Proc. Natl. Acad. Sci. U.S.A.">
        <title>A molecular approach to comparative phylogeography of extant Malagasy lemurs.</title>
        <authorList>
            <person name="Pastorini J."/>
            <person name="Thalmann U."/>
            <person name="Martin R.D."/>
        </authorList>
    </citation>
    <scope>NUCLEOTIDE SEQUENCE [GENOMIC DNA]</scope>
    <source>
        <strain>Isolate JP143</strain>
        <strain>Isolate JP144</strain>
    </source>
</reference>
<reference key="2">
    <citation type="journal article" date="2006" name="Int. J. Primatol.">
        <title>Revision of the mouse lemurs (Microcebus) of Eastern Madagascar.</title>
        <authorList>
            <person name="Louis E.E. Jr."/>
            <person name="Coles M.S."/>
            <person name="Andriantompohavana R."/>
            <person name="Sommer J.A."/>
            <person name="Engberg S.E."/>
            <person name="Zaonarivelo J.R."/>
            <person name="Mayor M.I."/>
            <person name="Brenneman R.A."/>
        </authorList>
    </citation>
    <scope>NUCLEOTIDE SEQUENCE [GENOMIC DNA]</scope>
    <source>
        <strain>Isolate RANO351</strain>
        <strain>Isolate RANO352</strain>
    </source>
</reference>
<accession>Q8HC89</accession>
<accession>Q05FC5</accession>